<accession>Q9X0Y0</accession>
<comment type="function">
    <text evidence="1">Catalyzes the ATP-dependent amidation of deamido-NAD to form NAD. Uses L-glutamine as a nitrogen source.</text>
</comment>
<comment type="catalytic activity">
    <reaction evidence="1">
        <text>deamido-NAD(+) + L-glutamine + ATP + H2O = L-glutamate + AMP + diphosphate + NAD(+) + H(+)</text>
        <dbReference type="Rhea" id="RHEA:24384"/>
        <dbReference type="ChEBI" id="CHEBI:15377"/>
        <dbReference type="ChEBI" id="CHEBI:15378"/>
        <dbReference type="ChEBI" id="CHEBI:29985"/>
        <dbReference type="ChEBI" id="CHEBI:30616"/>
        <dbReference type="ChEBI" id="CHEBI:33019"/>
        <dbReference type="ChEBI" id="CHEBI:57540"/>
        <dbReference type="ChEBI" id="CHEBI:58359"/>
        <dbReference type="ChEBI" id="CHEBI:58437"/>
        <dbReference type="ChEBI" id="CHEBI:456215"/>
        <dbReference type="EC" id="6.3.5.1"/>
    </reaction>
</comment>
<comment type="pathway">
    <text evidence="1">Cofactor biosynthesis; NAD(+) biosynthesis; NAD(+) from deamido-NAD(+) (L-Gln route): step 1/1.</text>
</comment>
<comment type="similarity">
    <text evidence="1 3">In the C-terminal section; belongs to the NAD synthetase family.</text>
</comment>
<reference key="1">
    <citation type="journal article" date="1999" name="Nature">
        <title>Evidence for lateral gene transfer between Archaea and Bacteria from genome sequence of Thermotoga maritima.</title>
        <authorList>
            <person name="Nelson K.E."/>
            <person name="Clayton R.A."/>
            <person name="Gill S.R."/>
            <person name="Gwinn M.L."/>
            <person name="Dodson R.J."/>
            <person name="Haft D.H."/>
            <person name="Hickey E.K."/>
            <person name="Peterson J.D."/>
            <person name="Nelson W.C."/>
            <person name="Ketchum K.A."/>
            <person name="McDonald L.A."/>
            <person name="Utterback T.R."/>
            <person name="Malek J.A."/>
            <person name="Linher K.D."/>
            <person name="Garrett M.M."/>
            <person name="Stewart A.M."/>
            <person name="Cotton M.D."/>
            <person name="Pratt M.S."/>
            <person name="Phillips C.A."/>
            <person name="Richardson D.L."/>
            <person name="Heidelberg J.F."/>
            <person name="Sutton G.G."/>
            <person name="Fleischmann R.D."/>
            <person name="Eisen J.A."/>
            <person name="White O."/>
            <person name="Salzberg S.L."/>
            <person name="Smith H.O."/>
            <person name="Venter J.C."/>
            <person name="Fraser C.M."/>
        </authorList>
    </citation>
    <scope>NUCLEOTIDE SEQUENCE [LARGE SCALE GENOMIC DNA]</scope>
    <source>
        <strain>ATCC 43589 / DSM 3109 / JCM 10099 / NBRC 100826 / MSB8</strain>
    </source>
</reference>
<name>NADE2_THEMA</name>
<organism>
    <name type="scientific">Thermotoga maritima (strain ATCC 43589 / DSM 3109 / JCM 10099 / NBRC 100826 / MSB8)</name>
    <dbReference type="NCBI Taxonomy" id="243274"/>
    <lineage>
        <taxon>Bacteria</taxon>
        <taxon>Thermotogati</taxon>
        <taxon>Thermotogota</taxon>
        <taxon>Thermotogae</taxon>
        <taxon>Thermotogales</taxon>
        <taxon>Thermotogaceae</taxon>
        <taxon>Thermotoga</taxon>
    </lineage>
</organism>
<gene>
    <name type="primary">nadE2</name>
    <name type="ordered locus">TM_1253</name>
</gene>
<proteinExistence type="inferred from homology"/>
<keyword id="KW-0067">ATP-binding</keyword>
<keyword id="KW-0436">Ligase</keyword>
<keyword id="KW-0520">NAD</keyword>
<keyword id="KW-0547">Nucleotide-binding</keyword>
<keyword id="KW-1185">Reference proteome</keyword>
<protein>
    <recommendedName>
        <fullName evidence="1">Glutamine-dependent NAD(+) synthetase</fullName>
        <ecNumber evidence="1">6.3.5.1</ecNumber>
    </recommendedName>
    <alternativeName>
        <fullName evidence="1">NAD(+) synthase [glutamine-hydrolyzing]</fullName>
    </alternativeName>
</protein>
<dbReference type="EC" id="6.3.5.1" evidence="1"/>
<dbReference type="EMBL" id="AE000512">
    <property type="protein sequence ID" value="AAD36328.1"/>
    <property type="molecule type" value="Genomic_DNA"/>
</dbReference>
<dbReference type="PIR" id="G72277">
    <property type="entry name" value="G72277"/>
</dbReference>
<dbReference type="RefSeq" id="NP_229058.1">
    <property type="nucleotide sequence ID" value="NC_000853.1"/>
</dbReference>
<dbReference type="RefSeq" id="WP_004080010.1">
    <property type="nucleotide sequence ID" value="NZ_CP011107.1"/>
</dbReference>
<dbReference type="SMR" id="Q9X0Y0"/>
<dbReference type="STRING" id="243274.TM_1253"/>
<dbReference type="PaxDb" id="243274-THEMA_08070"/>
<dbReference type="EnsemblBacteria" id="AAD36328">
    <property type="protein sequence ID" value="AAD36328"/>
    <property type="gene ID" value="TM_1253"/>
</dbReference>
<dbReference type="KEGG" id="tma:TM1253"/>
<dbReference type="KEGG" id="tmi:THEMA_08070"/>
<dbReference type="KEGG" id="tmm:Tmari_1258"/>
<dbReference type="KEGG" id="tmw:THMA_1278"/>
<dbReference type="eggNOG" id="COG0171">
    <property type="taxonomic scope" value="Bacteria"/>
</dbReference>
<dbReference type="eggNOG" id="COG0388">
    <property type="taxonomic scope" value="Bacteria"/>
</dbReference>
<dbReference type="InParanoid" id="Q9X0Y0"/>
<dbReference type="OrthoDB" id="9803818at2"/>
<dbReference type="BioCyc" id="MetaCyc:MONOMER-21964"/>
<dbReference type="UniPathway" id="UPA00253">
    <property type="reaction ID" value="UER00334"/>
</dbReference>
<dbReference type="Proteomes" id="UP000008183">
    <property type="component" value="Chromosome"/>
</dbReference>
<dbReference type="GO" id="GO:0005737">
    <property type="term" value="C:cytoplasm"/>
    <property type="evidence" value="ECO:0000318"/>
    <property type="project" value="GO_Central"/>
</dbReference>
<dbReference type="GO" id="GO:0005524">
    <property type="term" value="F:ATP binding"/>
    <property type="evidence" value="ECO:0007669"/>
    <property type="project" value="UniProtKB-UniRule"/>
</dbReference>
<dbReference type="GO" id="GO:0004359">
    <property type="term" value="F:glutaminase activity"/>
    <property type="evidence" value="ECO:0007669"/>
    <property type="project" value="InterPro"/>
</dbReference>
<dbReference type="GO" id="GO:0003952">
    <property type="term" value="F:NAD+ synthase (glutamine-hydrolyzing) activity"/>
    <property type="evidence" value="ECO:0007669"/>
    <property type="project" value="UniProtKB-EC"/>
</dbReference>
<dbReference type="GO" id="GO:0008795">
    <property type="term" value="F:NAD+ synthase activity"/>
    <property type="evidence" value="ECO:0007669"/>
    <property type="project" value="UniProtKB-UniRule"/>
</dbReference>
<dbReference type="GO" id="GO:0000257">
    <property type="term" value="F:nitrilase activity"/>
    <property type="evidence" value="ECO:0007669"/>
    <property type="project" value="UniProtKB-ARBA"/>
</dbReference>
<dbReference type="GO" id="GO:0009435">
    <property type="term" value="P:NAD biosynthetic process"/>
    <property type="evidence" value="ECO:0000318"/>
    <property type="project" value="GO_Central"/>
</dbReference>
<dbReference type="CDD" id="cd07570">
    <property type="entry name" value="GAT_Gln-NAD-synth"/>
    <property type="match status" value="1"/>
</dbReference>
<dbReference type="CDD" id="cd00553">
    <property type="entry name" value="NAD_synthase"/>
    <property type="match status" value="1"/>
</dbReference>
<dbReference type="FunFam" id="3.40.50.620:FF:000106">
    <property type="entry name" value="Glutamine-dependent NAD(+) synthetase"/>
    <property type="match status" value="1"/>
</dbReference>
<dbReference type="FunFam" id="3.60.110.10:FF:000043">
    <property type="entry name" value="Glutamine-dependent NAD(+) synthetase"/>
    <property type="match status" value="1"/>
</dbReference>
<dbReference type="Gene3D" id="3.60.110.10">
    <property type="entry name" value="Carbon-nitrogen hydrolase"/>
    <property type="match status" value="1"/>
</dbReference>
<dbReference type="Gene3D" id="3.40.50.620">
    <property type="entry name" value="HUPs"/>
    <property type="match status" value="1"/>
</dbReference>
<dbReference type="HAMAP" id="MF_02090">
    <property type="entry name" value="NadE_glutamine_dep"/>
    <property type="match status" value="1"/>
</dbReference>
<dbReference type="InterPro" id="IPR003010">
    <property type="entry name" value="C-N_Hydrolase"/>
</dbReference>
<dbReference type="InterPro" id="IPR036526">
    <property type="entry name" value="C-N_Hydrolase_sf"/>
</dbReference>
<dbReference type="InterPro" id="IPR014445">
    <property type="entry name" value="Gln-dep_NAD_synthase"/>
</dbReference>
<dbReference type="InterPro" id="IPR022310">
    <property type="entry name" value="NAD/GMP_synthase"/>
</dbReference>
<dbReference type="InterPro" id="IPR003694">
    <property type="entry name" value="NAD_synthase"/>
</dbReference>
<dbReference type="InterPro" id="IPR000132">
    <property type="entry name" value="Nitrilase/CN_hydratase_CS"/>
</dbReference>
<dbReference type="InterPro" id="IPR014729">
    <property type="entry name" value="Rossmann-like_a/b/a_fold"/>
</dbReference>
<dbReference type="NCBIfam" id="TIGR00552">
    <property type="entry name" value="nadE"/>
    <property type="match status" value="1"/>
</dbReference>
<dbReference type="NCBIfam" id="NF010588">
    <property type="entry name" value="PRK13981.1"/>
    <property type="match status" value="1"/>
</dbReference>
<dbReference type="PANTHER" id="PTHR23090:SF9">
    <property type="entry name" value="GLUTAMINE-DEPENDENT NAD(+) SYNTHETASE"/>
    <property type="match status" value="1"/>
</dbReference>
<dbReference type="PANTHER" id="PTHR23090">
    <property type="entry name" value="NH 3 /GLUTAMINE-DEPENDENT NAD + SYNTHETASE"/>
    <property type="match status" value="1"/>
</dbReference>
<dbReference type="Pfam" id="PF00795">
    <property type="entry name" value="CN_hydrolase"/>
    <property type="match status" value="1"/>
</dbReference>
<dbReference type="Pfam" id="PF02540">
    <property type="entry name" value="NAD_synthase"/>
    <property type="match status" value="1"/>
</dbReference>
<dbReference type="PIRSF" id="PIRSF006630">
    <property type="entry name" value="NADS_GAT"/>
    <property type="match status" value="1"/>
</dbReference>
<dbReference type="SUPFAM" id="SSF52402">
    <property type="entry name" value="Adenine nucleotide alpha hydrolases-like"/>
    <property type="match status" value="1"/>
</dbReference>
<dbReference type="SUPFAM" id="SSF56317">
    <property type="entry name" value="Carbon-nitrogen hydrolase"/>
    <property type="match status" value="1"/>
</dbReference>
<dbReference type="PROSITE" id="PS50263">
    <property type="entry name" value="CN_HYDROLASE"/>
    <property type="match status" value="1"/>
</dbReference>
<dbReference type="PROSITE" id="PS00920">
    <property type="entry name" value="NITRIL_CHT_1"/>
    <property type="match status" value="1"/>
</dbReference>
<sequence>MKRLRVTLAQLNPTLGDFEGNLKKAIEALRVAEDRGSDLLVFPELFLPGYPPEDLMLRLSFLRENRKYLQKFAQHTRNLGVTVLMGFIDSDEDAYNAAAVVKDGEILGVYRKISLPNYGVFDERRYFKPGEELLVVKIGNIKVGVTICEDIWNPVEPSASLSLGEGVHLIANLSASPYHVGKPVLRKDYLSMKAYDYHVAMAYCNMVGGQDELVFDGGSMVVDASGEVINYGKLFEEEIITVDLDLDENLRVSLVDPRRRYMKTQNYPVKTVEAGNLREKSGHFEPVVNPLPVREEEMFRALITGLRDYVRKNGFEKVVIGLSGGMDSSLVAVIATEALGKENVKGVLMPSMYTSKESIEDAQTLAKNLGIETFIIPITDVFHSYLETLKGVFAGREPDITEENLQARIRGNYLMALSNKFGWLVLTTGNKSEMATGYATLYGDMAGGFAVIKDVYKTDVYRIGRWYNSWRGKEIIPENIFVKPPTAELRPGQTDQEKLPPYEVLDEILRLYIEEGLDPEEIASKGFDRKTVLDVTEMIRKNEYKRKQAAIGVKISTRAFGKDWRMPITNRFKEPL</sequence>
<feature type="chain" id="PRO_0000152245" description="Glutamine-dependent NAD(+) synthetase">
    <location>
        <begin position="1"/>
        <end position="576"/>
    </location>
</feature>
<feature type="domain" description="CN hydrolase" evidence="2">
    <location>
        <begin position="4"/>
        <end position="246"/>
    </location>
</feature>
<feature type="region of interest" description="Ligase">
    <location>
        <begin position="292"/>
        <end position="576"/>
    </location>
</feature>
<feature type="active site" description="Proton acceptor; for glutaminase activity" evidence="1">
    <location>
        <position position="44"/>
    </location>
</feature>
<feature type="active site" description="For glutaminase activity" evidence="1">
    <location>
        <position position="112"/>
    </location>
</feature>
<feature type="active site" description="Nucleophile; for glutaminase activity" evidence="1">
    <location>
        <position position="148"/>
    </location>
</feature>
<feature type="binding site" evidence="1">
    <location>
        <position position="118"/>
    </location>
    <ligand>
        <name>L-glutamine</name>
        <dbReference type="ChEBI" id="CHEBI:58359"/>
    </ligand>
</feature>
<feature type="binding site" evidence="1">
    <location>
        <position position="176"/>
    </location>
    <ligand>
        <name>L-glutamine</name>
        <dbReference type="ChEBI" id="CHEBI:58359"/>
    </ligand>
</feature>
<feature type="binding site" evidence="1">
    <location>
        <position position="182"/>
    </location>
    <ligand>
        <name>L-glutamine</name>
        <dbReference type="ChEBI" id="CHEBI:58359"/>
    </ligand>
</feature>
<feature type="binding site" evidence="1">
    <location>
        <begin position="321"/>
        <end position="328"/>
    </location>
    <ligand>
        <name>ATP</name>
        <dbReference type="ChEBI" id="CHEBI:30616"/>
    </ligand>
</feature>
<feature type="binding site" evidence="1">
    <location>
        <position position="404"/>
    </location>
    <ligand>
        <name>deamido-NAD(+)</name>
        <dbReference type="ChEBI" id="CHEBI:58437"/>
    </ligand>
</feature>
<feature type="binding site" evidence="1">
    <location>
        <position position="428"/>
    </location>
    <ligand>
        <name>ATP</name>
        <dbReference type="ChEBI" id="CHEBI:30616"/>
    </ligand>
</feature>
<feature type="binding site" evidence="1">
    <location>
        <position position="433"/>
    </location>
    <ligand>
        <name>deamido-NAD(+)</name>
        <dbReference type="ChEBI" id="CHEBI:58437"/>
    </ligand>
</feature>
<feature type="binding site" evidence="1">
    <location>
        <position position="545"/>
    </location>
    <ligand>
        <name>deamido-NAD(+)</name>
        <dbReference type="ChEBI" id="CHEBI:58437"/>
    </ligand>
</feature>
<evidence type="ECO:0000255" key="1">
    <source>
        <dbReference type="HAMAP-Rule" id="MF_02090"/>
    </source>
</evidence>
<evidence type="ECO:0000255" key="2">
    <source>
        <dbReference type="PROSITE-ProRule" id="PRU00054"/>
    </source>
</evidence>
<evidence type="ECO:0000305" key="3"/>